<accession>F4I6M4</accession>
<accession>Q9C6J1</accession>
<dbReference type="EMBL" id="AC079284">
    <property type="protein sequence ID" value="AAG50927.1"/>
    <property type="status" value="ALT_INIT"/>
    <property type="molecule type" value="Genomic_DNA"/>
</dbReference>
<dbReference type="EMBL" id="CP002684">
    <property type="protein sequence ID" value="AEE32598.1"/>
    <property type="molecule type" value="Genomic_DNA"/>
</dbReference>
<dbReference type="PIR" id="H96545">
    <property type="entry name" value="H96545"/>
</dbReference>
<dbReference type="RefSeq" id="NP_175502.2">
    <property type="nucleotide sequence ID" value="NM_103969.3"/>
</dbReference>
<dbReference type="SMR" id="F4I6M4"/>
<dbReference type="FunCoup" id="F4I6M4">
    <property type="interactions" value="2"/>
</dbReference>
<dbReference type="IntAct" id="F4I6M4">
    <property type="interactions" value="1"/>
</dbReference>
<dbReference type="STRING" id="3702.F4I6M4"/>
<dbReference type="iPTMnet" id="F4I6M4"/>
<dbReference type="PaxDb" id="3702-AT1G50890.1"/>
<dbReference type="ProteomicsDB" id="232554"/>
<dbReference type="EnsemblPlants" id="AT1G50890.1">
    <property type="protein sequence ID" value="AT1G50890.1"/>
    <property type="gene ID" value="AT1G50890"/>
</dbReference>
<dbReference type="GeneID" id="841511"/>
<dbReference type="Gramene" id="AT1G50890.1">
    <property type="protein sequence ID" value="AT1G50890.1"/>
    <property type="gene ID" value="AT1G50890"/>
</dbReference>
<dbReference type="KEGG" id="ath:AT1G50890"/>
<dbReference type="Araport" id="AT1G50890"/>
<dbReference type="TAIR" id="AT1G50890"/>
<dbReference type="eggNOG" id="ENOG502QUFS">
    <property type="taxonomic scope" value="Eukaryota"/>
</dbReference>
<dbReference type="HOGENOM" id="CLU_019435_0_0_1"/>
<dbReference type="InParanoid" id="F4I6M4"/>
<dbReference type="OMA" id="TCWSNAM"/>
<dbReference type="PRO" id="PR:F4I6M4"/>
<dbReference type="Proteomes" id="UP000006548">
    <property type="component" value="Chromosome 1"/>
</dbReference>
<dbReference type="ExpressionAtlas" id="F4I6M4">
    <property type="expression patterns" value="baseline and differential"/>
</dbReference>
<dbReference type="GO" id="GO:0005737">
    <property type="term" value="C:cytoplasm"/>
    <property type="evidence" value="ECO:0007669"/>
    <property type="project" value="UniProtKB-KW"/>
</dbReference>
<dbReference type="GO" id="GO:0005874">
    <property type="term" value="C:microtubule"/>
    <property type="evidence" value="ECO:0007669"/>
    <property type="project" value="UniProtKB-KW"/>
</dbReference>
<dbReference type="GO" id="GO:0008017">
    <property type="term" value="F:microtubule binding"/>
    <property type="evidence" value="ECO:0007669"/>
    <property type="project" value="InterPro"/>
</dbReference>
<dbReference type="FunFam" id="1.25.10.10:FF:000224">
    <property type="entry name" value="Microtubule-associated protein TORTIFOLIA1"/>
    <property type="match status" value="1"/>
</dbReference>
<dbReference type="FunFam" id="1.25.10.10:FF:000339">
    <property type="entry name" value="Microtubule-associated protein TORTIFOLIA1"/>
    <property type="match status" value="1"/>
</dbReference>
<dbReference type="Gene3D" id="1.25.10.10">
    <property type="entry name" value="Leucine-rich Repeat Variant"/>
    <property type="match status" value="2"/>
</dbReference>
<dbReference type="InterPro" id="IPR011989">
    <property type="entry name" value="ARM-like"/>
</dbReference>
<dbReference type="InterPro" id="IPR016024">
    <property type="entry name" value="ARM-type_fold"/>
</dbReference>
<dbReference type="InterPro" id="IPR033337">
    <property type="entry name" value="TORTIFOLIA1/SINE1-2"/>
</dbReference>
<dbReference type="PANTHER" id="PTHR31355">
    <property type="entry name" value="MICROTUBULE-ASSOCIATED PROTEIN TORTIFOLIA1"/>
    <property type="match status" value="1"/>
</dbReference>
<dbReference type="PANTHER" id="PTHR31355:SF20">
    <property type="entry name" value="TORTIFOLIA1-LIKE PROTEIN 1"/>
    <property type="match status" value="1"/>
</dbReference>
<dbReference type="Pfam" id="PF24713">
    <property type="entry name" value="TOR1L1_C"/>
    <property type="match status" value="1"/>
</dbReference>
<dbReference type="Pfam" id="PF24714">
    <property type="entry name" value="TOR1L1_N"/>
    <property type="match status" value="1"/>
</dbReference>
<dbReference type="SUPFAM" id="SSF48371">
    <property type="entry name" value="ARM repeat"/>
    <property type="match status" value="1"/>
</dbReference>
<evidence type="ECO:0000250" key="1">
    <source>
        <dbReference type="UniProtKB" id="Q9T041"/>
    </source>
</evidence>
<evidence type="ECO:0000255" key="2"/>
<evidence type="ECO:0000256" key="3">
    <source>
        <dbReference type="SAM" id="MobiDB-lite"/>
    </source>
</evidence>
<evidence type="ECO:0000269" key="4">
    <source>
    </source>
</evidence>
<evidence type="ECO:0000303" key="5">
    <source>
    </source>
</evidence>
<evidence type="ECO:0000303" key="6">
    <source>
    </source>
</evidence>
<evidence type="ECO:0000305" key="7"/>
<evidence type="ECO:0000312" key="8">
    <source>
        <dbReference type="Araport" id="AT1G50890"/>
    </source>
</evidence>
<evidence type="ECO:0000312" key="9">
    <source>
        <dbReference type="EMBL" id="AAG50927.1"/>
    </source>
</evidence>
<feature type="chain" id="PRO_0000412561" description="TORTIFOLIA1-like protein 1">
    <location>
        <begin position="1"/>
        <end position="821"/>
    </location>
</feature>
<feature type="repeat" description="HEAT 1">
    <location>
        <begin position="69"/>
        <end position="110"/>
    </location>
</feature>
<feature type="repeat" description="HEAT 2">
    <location>
        <begin position="114"/>
        <end position="151"/>
    </location>
</feature>
<feature type="repeat" description="HEAT 3">
    <location>
        <begin position="163"/>
        <end position="201"/>
    </location>
</feature>
<feature type="repeat" description="HEAT 4">
    <location>
        <begin position="205"/>
        <end position="242"/>
    </location>
</feature>
<feature type="repeat" description="HEAT 5">
    <location>
        <begin position="245"/>
        <end position="282"/>
    </location>
</feature>
<feature type="region of interest" description="Disordered" evidence="3">
    <location>
        <begin position="416"/>
        <end position="437"/>
    </location>
</feature>
<feature type="region of interest" description="Disordered" evidence="3">
    <location>
        <begin position="553"/>
        <end position="610"/>
    </location>
</feature>
<feature type="coiled-coil region" evidence="2">
    <location>
        <begin position="501"/>
        <end position="554"/>
    </location>
</feature>
<feature type="compositionally biased region" description="Polar residues" evidence="3">
    <location>
        <begin position="579"/>
        <end position="590"/>
    </location>
</feature>
<feature type="modified residue" description="Phosphoserine" evidence="1">
    <location>
        <position position="406"/>
    </location>
</feature>
<keyword id="KW-0175">Coiled coil</keyword>
<keyword id="KW-0963">Cytoplasm</keyword>
<keyword id="KW-0206">Cytoskeleton</keyword>
<keyword id="KW-0493">Microtubule</keyword>
<keyword id="KW-0597">Phosphoprotein</keyword>
<keyword id="KW-1185">Reference proteome</keyword>
<keyword id="KW-0677">Repeat</keyword>
<sequence>MRSQTASKTSMKPSSNSSAFSVRSSVAVSSHSAMVELKQRILTSLSRLGDRDTYQIAVDDLEKIVVSVPDSPEILPVLLHCLFDSSSDLKAPVKRESIRLLSFLCLSYTDLSFSQLAKIISHIVKRLKDADNGVRDACRDAIGSLSAQFLKEKEVENGNYVGSSLVGLFAKPLFEAMAEQNKSLQSGAAICMGKMIDSATEPPVAAFQKLCPRISKLLNSPNYITKASLLPVVGSLSQVGAIAPQSLESLLHSIHECLGCTNWVTRKAAADVLISLAVHSSSLVADKTDSTLTALEACRFDKIKPVRESLSEALNVWKNIAGKGESGTMDDQKDVSSEQCILERNGETDSVSCEEAGLVMQGSCDGLSSSSDSISKAVLILRKKAPRLTGKDLNPEFFQKLEKRGSGDMPVEVILPSRQKNSSNSNTEDESDANTSVLRSRSNGLCRTAGVHTKQRHFGDFAREKWVDERMNGGESRLRAFDGDHTEVIQADTSENRGNWPPLQRQLLHLERQQTHIMNMLQDFMGGSHDGMISLENRVRGLERIVEEMSREMSIQSGARGKATASWRSDVDGWDSPNYGPSSRNTQTSTRKIRGTGPSEQSGNSRRAWDKSSVAIRLGEGPSARSVWQASKDEATLEAIRVAGEDCGTSRNRRVSIPEAEAMMDEDDDNRGGQQGDPIWTCWSNSVHALRVGDTDSAFAEVLSTGDDHLLVKLMDKTGPVLDQLSSDMGNEAIHSIAQFLLDHTLYDICLSWIQQLLEVSVENGADFMGIPLELKKELLLNLHEALSTTDPPEDWEGLAPDHLLVELASNWNIEIQHFDT</sequence>
<reference key="1">
    <citation type="journal article" date="2000" name="Nature">
        <title>Sequence and analysis of chromosome 1 of the plant Arabidopsis thaliana.</title>
        <authorList>
            <person name="Theologis A."/>
            <person name="Ecker J.R."/>
            <person name="Palm C.J."/>
            <person name="Federspiel N.A."/>
            <person name="Kaul S."/>
            <person name="White O."/>
            <person name="Alonso J."/>
            <person name="Altafi H."/>
            <person name="Araujo R."/>
            <person name="Bowman C.L."/>
            <person name="Brooks S.Y."/>
            <person name="Buehler E."/>
            <person name="Chan A."/>
            <person name="Chao Q."/>
            <person name="Chen H."/>
            <person name="Cheuk R.F."/>
            <person name="Chin C.W."/>
            <person name="Chung M.K."/>
            <person name="Conn L."/>
            <person name="Conway A.B."/>
            <person name="Conway A.R."/>
            <person name="Creasy T.H."/>
            <person name="Dewar K."/>
            <person name="Dunn P."/>
            <person name="Etgu P."/>
            <person name="Feldblyum T.V."/>
            <person name="Feng J.-D."/>
            <person name="Fong B."/>
            <person name="Fujii C.Y."/>
            <person name="Gill J.E."/>
            <person name="Goldsmith A.D."/>
            <person name="Haas B."/>
            <person name="Hansen N.F."/>
            <person name="Hughes B."/>
            <person name="Huizar L."/>
            <person name="Hunter J.L."/>
            <person name="Jenkins J."/>
            <person name="Johnson-Hopson C."/>
            <person name="Khan S."/>
            <person name="Khaykin E."/>
            <person name="Kim C.J."/>
            <person name="Koo H.L."/>
            <person name="Kremenetskaia I."/>
            <person name="Kurtz D.B."/>
            <person name="Kwan A."/>
            <person name="Lam B."/>
            <person name="Langin-Hooper S."/>
            <person name="Lee A."/>
            <person name="Lee J.M."/>
            <person name="Lenz C.A."/>
            <person name="Li J.H."/>
            <person name="Li Y.-P."/>
            <person name="Lin X."/>
            <person name="Liu S.X."/>
            <person name="Liu Z.A."/>
            <person name="Luros J.S."/>
            <person name="Maiti R."/>
            <person name="Marziali A."/>
            <person name="Militscher J."/>
            <person name="Miranda M."/>
            <person name="Nguyen M."/>
            <person name="Nierman W.C."/>
            <person name="Osborne B.I."/>
            <person name="Pai G."/>
            <person name="Peterson J."/>
            <person name="Pham P.K."/>
            <person name="Rizzo M."/>
            <person name="Rooney T."/>
            <person name="Rowley D."/>
            <person name="Sakano H."/>
            <person name="Salzberg S.L."/>
            <person name="Schwartz J.R."/>
            <person name="Shinn P."/>
            <person name="Southwick A.M."/>
            <person name="Sun H."/>
            <person name="Tallon L.J."/>
            <person name="Tambunga G."/>
            <person name="Toriumi M.J."/>
            <person name="Town C.D."/>
            <person name="Utterback T."/>
            <person name="Van Aken S."/>
            <person name="Vaysberg M."/>
            <person name="Vysotskaia V.S."/>
            <person name="Walker M."/>
            <person name="Wu D."/>
            <person name="Yu G."/>
            <person name="Fraser C.M."/>
            <person name="Venter J.C."/>
            <person name="Davis R.W."/>
        </authorList>
    </citation>
    <scope>NUCLEOTIDE SEQUENCE [LARGE SCALE GENOMIC DNA]</scope>
    <source>
        <strain>cv. Columbia</strain>
    </source>
</reference>
<reference key="2">
    <citation type="journal article" date="2017" name="Plant J.">
        <title>Araport11: a complete reannotation of the Arabidopsis thaliana reference genome.</title>
        <authorList>
            <person name="Cheng C.Y."/>
            <person name="Krishnakumar V."/>
            <person name="Chan A.P."/>
            <person name="Thibaud-Nissen F."/>
            <person name="Schobel S."/>
            <person name="Town C.D."/>
        </authorList>
    </citation>
    <scope>GENOME REANNOTATION</scope>
    <source>
        <strain>cv. Columbia</strain>
    </source>
</reference>
<reference key="3">
    <citation type="journal article" date="2004" name="Curr. Biol.">
        <title>Helical growth of the Arabidopsis mutant tortifolia1 reveals a plant-specific microtubule-associated protein.</title>
        <authorList>
            <person name="Buschmann H."/>
            <person name="Fabri C.O."/>
            <person name="Hauptmann M."/>
            <person name="Hutzler P."/>
            <person name="Laux T."/>
            <person name="Lloyd C.W."/>
            <person name="Schaeffner A.R."/>
        </authorList>
    </citation>
    <scope>GENE FAMILY</scope>
</reference>
<reference key="4">
    <citation type="journal article" date="2004" name="Plant Physiol.">
        <title>Plant-specific microtubule-associated protein SPIRAL2 is required for anisotropic growth in Arabidopsis.</title>
        <authorList>
            <person name="Shoji T."/>
            <person name="Narita N.N."/>
            <person name="Hayashi K."/>
            <person name="Asada J."/>
            <person name="Hamada T."/>
            <person name="Sonobe S."/>
            <person name="Nakajima K."/>
            <person name="Hashimoto T."/>
        </authorList>
    </citation>
    <scope>GENE FAMILY</scope>
</reference>
<reference key="5">
    <citation type="journal article" date="2008" name="J. Cell Sci.">
        <title>Arabidopsis SPIRAL2 promotes uninterrupted microtubule growth by suppressing the pause state of microtubule dynamics.</title>
        <authorList>
            <person name="Yao M."/>
            <person name="Wakamatsu Y."/>
            <person name="Itoh T.J."/>
            <person name="Shoji T."/>
            <person name="Hashimoto T."/>
        </authorList>
    </citation>
    <scope>FUNCTION</scope>
    <scope>DISRUPTION PHENOTYPE</scope>
    <scope>TISSUE SPECIFICITY</scope>
    <scope>SUBCELLULAR LOCATION</scope>
    <source>
        <strain>cv. Columbia</strain>
    </source>
</reference>
<gene>
    <name evidence="5" type="primary">TOR1L1</name>
    <name evidence="6" type="synonym">SP2L</name>
    <name evidence="8" type="ordered locus">At1g50890</name>
    <name evidence="9" type="ORF">F8A12.11</name>
</gene>
<proteinExistence type="evidence at transcript level"/>
<organism>
    <name type="scientific">Arabidopsis thaliana</name>
    <name type="common">Mouse-ear cress</name>
    <dbReference type="NCBI Taxonomy" id="3702"/>
    <lineage>
        <taxon>Eukaryota</taxon>
        <taxon>Viridiplantae</taxon>
        <taxon>Streptophyta</taxon>
        <taxon>Embryophyta</taxon>
        <taxon>Tracheophyta</taxon>
        <taxon>Spermatophyta</taxon>
        <taxon>Magnoliopsida</taxon>
        <taxon>eudicotyledons</taxon>
        <taxon>Gunneridae</taxon>
        <taxon>Pentapetalae</taxon>
        <taxon>rosids</taxon>
        <taxon>malvids</taxon>
        <taxon>Brassicales</taxon>
        <taxon>Brassicaceae</taxon>
        <taxon>Camelineae</taxon>
        <taxon>Arabidopsis</taxon>
    </lineage>
</organism>
<comment type="function">
    <text evidence="4">Plant-specific microtubule-associated protein (MAP) that regulates the orientation of cortical microtubules and the direction of organ growth.</text>
</comment>
<comment type="subcellular location">
    <subcellularLocation>
        <location evidence="4">Cytoplasm</location>
        <location evidence="4">Cytoskeleton</location>
    </subcellularLocation>
    <text>Bound to microtubules.</text>
</comment>
<comment type="tissue specificity">
    <text evidence="4">Expressed at low levels in roots, hypocotyls, stems, flowers, siliques, cotyledons, and leaves. Particularly present in hydathodes of cotyledons and root hairs.</text>
</comment>
<comment type="disruption phenotype">
    <text evidence="4">Right-handed twisting of petioles when associated with SPR2 disruption.</text>
</comment>
<comment type="sequence caution" evidence="7">
    <conflict type="erroneous initiation">
        <sequence resource="EMBL-CDS" id="AAG50927"/>
    </conflict>
    <text>Truncated N-terminus.</text>
</comment>
<name>TORL1_ARATH</name>
<protein>
    <recommendedName>
        <fullName evidence="5">TORTIFOLIA1-like protein 1</fullName>
    </recommendedName>
    <alternativeName>
        <fullName evidence="6">Microtubule-associated protein SPIRAL2-like</fullName>
    </alternativeName>
</protein>